<proteinExistence type="inferred from homology"/>
<feature type="chain" id="PRO_0000200986" description="UPF0761 membrane protein IL2447">
    <location>
        <begin position="1"/>
        <end position="284"/>
    </location>
</feature>
<feature type="transmembrane region" description="Helical" evidence="1">
    <location>
        <begin position="41"/>
        <end position="61"/>
    </location>
</feature>
<feature type="transmembrane region" description="Helical" evidence="1">
    <location>
        <begin position="98"/>
        <end position="118"/>
    </location>
</feature>
<feature type="transmembrane region" description="Helical" evidence="1">
    <location>
        <begin position="137"/>
        <end position="157"/>
    </location>
</feature>
<feature type="transmembrane region" description="Helical" evidence="1">
    <location>
        <begin position="178"/>
        <end position="198"/>
    </location>
</feature>
<feature type="transmembrane region" description="Helical" evidence="1">
    <location>
        <begin position="214"/>
        <end position="234"/>
    </location>
</feature>
<feature type="transmembrane region" description="Helical" evidence="1">
    <location>
        <begin position="247"/>
        <end position="267"/>
    </location>
</feature>
<dbReference type="EMBL" id="AE017340">
    <property type="protein sequence ID" value="AAV83279.1"/>
    <property type="molecule type" value="Genomic_DNA"/>
</dbReference>
<dbReference type="RefSeq" id="WP_011235672.1">
    <property type="nucleotide sequence ID" value="NC_006512.1"/>
</dbReference>
<dbReference type="STRING" id="283942.IL2447"/>
<dbReference type="DNASU" id="3172772"/>
<dbReference type="GeneID" id="41337641"/>
<dbReference type="KEGG" id="ilo:IL2447"/>
<dbReference type="eggNOG" id="COG1295">
    <property type="taxonomic scope" value="Bacteria"/>
</dbReference>
<dbReference type="HOGENOM" id="CLU_032288_0_0_6"/>
<dbReference type="OrthoDB" id="9808671at2"/>
<dbReference type="Proteomes" id="UP000001171">
    <property type="component" value="Chromosome"/>
</dbReference>
<dbReference type="GO" id="GO:0005886">
    <property type="term" value="C:plasma membrane"/>
    <property type="evidence" value="ECO:0007669"/>
    <property type="project" value="UniProtKB-SubCell"/>
</dbReference>
<dbReference type="HAMAP" id="MF_00672">
    <property type="entry name" value="UPF0761"/>
    <property type="match status" value="1"/>
</dbReference>
<dbReference type="InterPro" id="IPR023679">
    <property type="entry name" value="UPF0761_bac"/>
</dbReference>
<dbReference type="InterPro" id="IPR017039">
    <property type="entry name" value="Virul_fac_BrkB"/>
</dbReference>
<dbReference type="NCBIfam" id="NF002457">
    <property type="entry name" value="PRK01637.1"/>
    <property type="match status" value="1"/>
</dbReference>
<dbReference type="NCBIfam" id="TIGR00765">
    <property type="entry name" value="yihY_not_rbn"/>
    <property type="match status" value="1"/>
</dbReference>
<dbReference type="PANTHER" id="PTHR30213">
    <property type="entry name" value="INNER MEMBRANE PROTEIN YHJD"/>
    <property type="match status" value="1"/>
</dbReference>
<dbReference type="PANTHER" id="PTHR30213:SF0">
    <property type="entry name" value="UPF0761 MEMBRANE PROTEIN YIHY"/>
    <property type="match status" value="1"/>
</dbReference>
<dbReference type="Pfam" id="PF03631">
    <property type="entry name" value="Virul_fac_BrkB"/>
    <property type="match status" value="1"/>
</dbReference>
<dbReference type="PIRSF" id="PIRSF035875">
    <property type="entry name" value="RNase_BN"/>
    <property type="match status" value="1"/>
</dbReference>
<sequence length="284" mass="32258">MKQIEWKSYFNHTLGFLKYFGQRFNSDNTNITAGHLTYVSMLSLVPLLVVMFTVFSAFPMFDELKENLEQALFANLLPTSGEQLEEYLNEFVTNASKMTAIGVGFLFIVAIMLMSAIDKALNSIWRDSSSRHWLVSFAVYWMLLTLGPVLIGSGLAATSYLMSLSQFADEYVSGIQSFVLWFVPIVTSFVFFVLMYQLVPNRQVKFRYAAFGAVIAALLFELSKQLFSLYITFFPTYQAIYGALATIPILIVWIYLSWLIVLIGAVLTVSLEEYQLQQPEPKSD</sequence>
<name>Y2447_IDILO</name>
<organism>
    <name type="scientific">Idiomarina loihiensis (strain ATCC BAA-735 / DSM 15497 / L2-TR)</name>
    <dbReference type="NCBI Taxonomy" id="283942"/>
    <lineage>
        <taxon>Bacteria</taxon>
        <taxon>Pseudomonadati</taxon>
        <taxon>Pseudomonadota</taxon>
        <taxon>Gammaproteobacteria</taxon>
        <taxon>Alteromonadales</taxon>
        <taxon>Idiomarinaceae</taxon>
        <taxon>Idiomarina</taxon>
    </lineage>
</organism>
<evidence type="ECO:0000255" key="1">
    <source>
        <dbReference type="HAMAP-Rule" id="MF_00672"/>
    </source>
</evidence>
<keyword id="KW-0997">Cell inner membrane</keyword>
<keyword id="KW-1003">Cell membrane</keyword>
<keyword id="KW-0472">Membrane</keyword>
<keyword id="KW-1185">Reference proteome</keyword>
<keyword id="KW-0812">Transmembrane</keyword>
<keyword id="KW-1133">Transmembrane helix</keyword>
<reference key="1">
    <citation type="journal article" date="2004" name="Proc. Natl. Acad. Sci. U.S.A.">
        <title>Genome sequence of the deep-sea gamma-proteobacterium Idiomarina loihiensis reveals amino acid fermentation as a source of carbon and energy.</title>
        <authorList>
            <person name="Hou S."/>
            <person name="Saw J.H."/>
            <person name="Lee K.S."/>
            <person name="Freitas T.A."/>
            <person name="Belisle C."/>
            <person name="Kawarabayasi Y."/>
            <person name="Donachie S.P."/>
            <person name="Pikina A."/>
            <person name="Galperin M.Y."/>
            <person name="Koonin E.V."/>
            <person name="Makarova K.S."/>
            <person name="Omelchenko M.V."/>
            <person name="Sorokin A."/>
            <person name="Wolf Y.I."/>
            <person name="Li Q.X."/>
            <person name="Keum Y.S."/>
            <person name="Campbell S."/>
            <person name="Denery J."/>
            <person name="Aizawa S."/>
            <person name="Shibata S."/>
            <person name="Malahoff A."/>
            <person name="Alam M."/>
        </authorList>
    </citation>
    <scope>NUCLEOTIDE SEQUENCE [LARGE SCALE GENOMIC DNA]</scope>
    <source>
        <strain>ATCC BAA-735 / DSM 15497 / L2-TR</strain>
    </source>
</reference>
<comment type="subcellular location">
    <subcellularLocation>
        <location evidence="1">Cell inner membrane</location>
        <topology evidence="1">Multi-pass membrane protein</topology>
    </subcellularLocation>
</comment>
<comment type="similarity">
    <text evidence="1">Belongs to the UPF0761 family.</text>
</comment>
<accession>Q5QV33</accession>
<protein>
    <recommendedName>
        <fullName evidence="1">UPF0761 membrane protein IL2447</fullName>
    </recommendedName>
</protein>
<gene>
    <name type="ordered locus">IL2447</name>
</gene>